<name>E2ALB_AMOLO</name>
<sequence>MFTMKKSLLLLFFLGTISLSLCEEERSADEDDGEKGVKRGIFSLIKTAAKFVGKNLLKQAGKAGVEHLACKANNQC</sequence>
<organism>
    <name type="scientific">Amolops loloensis</name>
    <name type="common">Lolokou Sucker Frog</name>
    <name type="synonym">Staurois loloensis</name>
    <dbReference type="NCBI Taxonomy" id="318551"/>
    <lineage>
        <taxon>Eukaryota</taxon>
        <taxon>Metazoa</taxon>
        <taxon>Chordata</taxon>
        <taxon>Craniata</taxon>
        <taxon>Vertebrata</taxon>
        <taxon>Euteleostomi</taxon>
        <taxon>Amphibia</taxon>
        <taxon>Batrachia</taxon>
        <taxon>Anura</taxon>
        <taxon>Neobatrachia</taxon>
        <taxon>Ranoidea</taxon>
        <taxon>Ranidae</taxon>
        <taxon>Amolops</taxon>
    </lineage>
</organism>
<proteinExistence type="evidence at protein level"/>
<accession>C5H0D5</accession>
<feature type="signal peptide" evidence="1">
    <location>
        <begin position="1"/>
        <end position="22"/>
    </location>
</feature>
<feature type="propeptide" id="PRO_0000450002" evidence="5">
    <location>
        <begin position="23"/>
        <end position="39"/>
    </location>
</feature>
<feature type="chain" id="PRO_5002950379" description="Esculentin-2-ALb" evidence="2">
    <location>
        <begin position="40"/>
        <end position="76"/>
    </location>
</feature>
<feature type="disulfide bond" evidence="2">
    <location>
        <begin position="70"/>
        <end position="76"/>
    </location>
</feature>
<comment type="function">
    <text evidence="2">Antimicrobial peptide with activity against Gram-positive and Gram-negative bacteria and against fungi (PubMed:19843479). Has been tested against S.aureus (MIC=1.25 ug/mL), B.pumilus (MIC=2.5 ug/mL), B.cereus (MIC=7.5 ug/mL), E.coli (MIC=12.5 ug/mL), B.dysenteriae (MIC=7.5 ug/mL), A.cacoaceticus (MIC=12.5 ug/mL), P.aeruginosa (MIC=50.0 ug/mL) and C.albicans (MIC=2.5 ug/mL) (PubMed:19843479). Also shows a weak hemolytic activity (PubMed:19843479).</text>
</comment>
<comment type="subcellular location">
    <subcellularLocation>
        <location evidence="2">Secreted</location>
    </subcellularLocation>
</comment>
<comment type="tissue specificity">
    <text evidence="5">Expressed by the skin glands.</text>
</comment>
<comment type="mass spectrometry"/>
<comment type="similarity">
    <text evidence="4">Belongs to the frog skin active peptide (FSAP) family. Esculentin subfamily.</text>
</comment>
<comment type="online information" name="The antimicrobial peptide database">
    <link uri="https://wangapd3.com/database/query_output.php?ID=01930"/>
</comment>
<evidence type="ECO:0000255" key="1"/>
<evidence type="ECO:0000269" key="2">
    <source>
    </source>
</evidence>
<evidence type="ECO:0000303" key="3">
    <source>
    </source>
</evidence>
<evidence type="ECO:0000305" key="4"/>
<evidence type="ECO:0000305" key="5">
    <source>
    </source>
</evidence>
<evidence type="ECO:0000312" key="6">
    <source>
        <dbReference type="EMBL" id="ACA09638.1"/>
    </source>
</evidence>
<reference key="1">
    <citation type="journal article" date="2010" name="Comp. Biochem. Physiol.">
        <title>Five novel antimicrobial peptides from skin secretions of the frog, Amolops loloensis.</title>
        <authorList>
            <person name="Wang M."/>
            <person name="Wang Y."/>
            <person name="Wang A."/>
            <person name="Song Y."/>
            <person name="Ma D."/>
            <person name="Yang H."/>
            <person name="Ma Y."/>
            <person name="Lai R."/>
        </authorList>
    </citation>
    <scope>NUCLEOTIDE SEQUENCE [MRNA]</scope>
    <scope>PROTEIN SEQUENCE OF 40-76</scope>
    <scope>FUNCTION</scope>
    <scope>MASS SPECTROMETRY</scope>
    <scope>DISULFIDE BOND</scope>
    <scope>SUBCELLULAR LOCATION</scope>
    <source>
        <tissue>Skin</tissue>
        <tissue>Skin secretion</tissue>
    </source>
</reference>
<protein>
    <recommendedName>
        <fullName evidence="3">Esculentin-2-ALb</fullName>
    </recommendedName>
    <alternativeName>
        <fullName evidence="6">Amolopin-9b</fullName>
    </alternativeName>
</protein>
<dbReference type="EMBL" id="EU311548">
    <property type="protein sequence ID" value="ACA09638.1"/>
    <property type="molecule type" value="mRNA"/>
</dbReference>
<dbReference type="GO" id="GO:0005576">
    <property type="term" value="C:extracellular region"/>
    <property type="evidence" value="ECO:0007669"/>
    <property type="project" value="UniProtKB-SubCell"/>
</dbReference>
<dbReference type="GO" id="GO:0042742">
    <property type="term" value="P:defense response to bacterium"/>
    <property type="evidence" value="ECO:0007669"/>
    <property type="project" value="UniProtKB-KW"/>
</dbReference>
<dbReference type="GO" id="GO:0050832">
    <property type="term" value="P:defense response to fungus"/>
    <property type="evidence" value="ECO:0007669"/>
    <property type="project" value="UniProtKB-KW"/>
</dbReference>
<dbReference type="GO" id="GO:0045087">
    <property type="term" value="P:innate immune response"/>
    <property type="evidence" value="ECO:0007669"/>
    <property type="project" value="UniProtKB-KW"/>
</dbReference>
<dbReference type="GO" id="GO:0031640">
    <property type="term" value="P:killing of cells of another organism"/>
    <property type="evidence" value="ECO:0007669"/>
    <property type="project" value="UniProtKB-KW"/>
</dbReference>
<dbReference type="InterPro" id="IPR012521">
    <property type="entry name" value="Antimicrobial_frog_2"/>
</dbReference>
<dbReference type="InterPro" id="IPR004275">
    <property type="entry name" value="Frog_antimicrobial_propeptide"/>
</dbReference>
<dbReference type="Pfam" id="PF08023">
    <property type="entry name" value="Antimicrobial_2"/>
    <property type="match status" value="1"/>
</dbReference>
<dbReference type="Pfam" id="PF03032">
    <property type="entry name" value="FSAP_sig_propep"/>
    <property type="match status" value="1"/>
</dbReference>
<keyword id="KW-0878">Amphibian defense peptide</keyword>
<keyword id="KW-0044">Antibiotic</keyword>
<keyword id="KW-0929">Antimicrobial</keyword>
<keyword id="KW-0165">Cleavage on pair of basic residues</keyword>
<keyword id="KW-0903">Direct protein sequencing</keyword>
<keyword id="KW-1015">Disulfide bond</keyword>
<keyword id="KW-0295">Fungicide</keyword>
<keyword id="KW-0391">Immunity</keyword>
<keyword id="KW-0399">Innate immunity</keyword>
<keyword id="KW-0964">Secreted</keyword>
<keyword id="KW-0732">Signal</keyword>